<protein>
    <recommendedName>
        <fullName evidence="1">Phosphomethylpyrimidine synthase</fullName>
        <ecNumber evidence="1">4.1.99.17</ecNumber>
    </recommendedName>
    <alternativeName>
        <fullName evidence="1">Hydroxymethylpyrimidine phosphate synthase</fullName>
        <shortName evidence="1">HMP-P synthase</shortName>
        <shortName evidence="1">HMP-phosphate synthase</shortName>
        <shortName evidence="1">HMPP synthase</shortName>
    </alternativeName>
    <alternativeName>
        <fullName evidence="1">Thiamine biosynthesis protein ThiC</fullName>
    </alternativeName>
</protein>
<accession>Q7MGM3</accession>
<name>THIC_VIBVY</name>
<organism>
    <name type="scientific">Vibrio vulnificus (strain YJ016)</name>
    <dbReference type="NCBI Taxonomy" id="196600"/>
    <lineage>
        <taxon>Bacteria</taxon>
        <taxon>Pseudomonadati</taxon>
        <taxon>Pseudomonadota</taxon>
        <taxon>Gammaproteobacteria</taxon>
        <taxon>Vibrionales</taxon>
        <taxon>Vibrionaceae</taxon>
        <taxon>Vibrio</taxon>
    </lineage>
</organism>
<evidence type="ECO:0000255" key="1">
    <source>
        <dbReference type="HAMAP-Rule" id="MF_00089"/>
    </source>
</evidence>
<evidence type="ECO:0000256" key="2">
    <source>
        <dbReference type="SAM" id="MobiDB-lite"/>
    </source>
</evidence>
<dbReference type="EC" id="4.1.99.17" evidence="1"/>
<dbReference type="EMBL" id="BA000037">
    <property type="protein sequence ID" value="BAC95971.1"/>
    <property type="molecule type" value="Genomic_DNA"/>
</dbReference>
<dbReference type="RefSeq" id="WP_011079010.1">
    <property type="nucleotide sequence ID" value="NC_005139.1"/>
</dbReference>
<dbReference type="SMR" id="Q7MGM3"/>
<dbReference type="STRING" id="672.VV93_v1c29260"/>
<dbReference type="KEGG" id="vvy:VV3207"/>
<dbReference type="PATRIC" id="fig|196600.6.peg.3174"/>
<dbReference type="eggNOG" id="COG0422">
    <property type="taxonomic scope" value="Bacteria"/>
</dbReference>
<dbReference type="HOGENOM" id="CLU_013181_2_1_6"/>
<dbReference type="UniPathway" id="UPA00060"/>
<dbReference type="Proteomes" id="UP000002675">
    <property type="component" value="Chromosome I"/>
</dbReference>
<dbReference type="GO" id="GO:0005829">
    <property type="term" value="C:cytosol"/>
    <property type="evidence" value="ECO:0007669"/>
    <property type="project" value="TreeGrafter"/>
</dbReference>
<dbReference type="GO" id="GO:0051539">
    <property type="term" value="F:4 iron, 4 sulfur cluster binding"/>
    <property type="evidence" value="ECO:0007669"/>
    <property type="project" value="UniProtKB-KW"/>
</dbReference>
<dbReference type="GO" id="GO:0016830">
    <property type="term" value="F:carbon-carbon lyase activity"/>
    <property type="evidence" value="ECO:0007669"/>
    <property type="project" value="InterPro"/>
</dbReference>
<dbReference type="GO" id="GO:0008270">
    <property type="term" value="F:zinc ion binding"/>
    <property type="evidence" value="ECO:0007669"/>
    <property type="project" value="UniProtKB-UniRule"/>
</dbReference>
<dbReference type="GO" id="GO:0009228">
    <property type="term" value="P:thiamine biosynthetic process"/>
    <property type="evidence" value="ECO:0007669"/>
    <property type="project" value="UniProtKB-KW"/>
</dbReference>
<dbReference type="GO" id="GO:0009229">
    <property type="term" value="P:thiamine diphosphate biosynthetic process"/>
    <property type="evidence" value="ECO:0007669"/>
    <property type="project" value="UniProtKB-UniRule"/>
</dbReference>
<dbReference type="FunFam" id="3.20.20.540:FF:000001">
    <property type="entry name" value="Phosphomethylpyrimidine synthase"/>
    <property type="match status" value="1"/>
</dbReference>
<dbReference type="Gene3D" id="6.10.250.620">
    <property type="match status" value="1"/>
</dbReference>
<dbReference type="Gene3D" id="3.20.20.540">
    <property type="entry name" value="Radical SAM ThiC family, central domain"/>
    <property type="match status" value="1"/>
</dbReference>
<dbReference type="HAMAP" id="MF_00089">
    <property type="entry name" value="ThiC"/>
    <property type="match status" value="1"/>
</dbReference>
<dbReference type="InterPro" id="IPR037509">
    <property type="entry name" value="ThiC"/>
</dbReference>
<dbReference type="InterPro" id="IPR025747">
    <property type="entry name" value="ThiC-associated_dom"/>
</dbReference>
<dbReference type="InterPro" id="IPR038521">
    <property type="entry name" value="ThiC/Bza_core_dom"/>
</dbReference>
<dbReference type="InterPro" id="IPR002817">
    <property type="entry name" value="ThiC/BzaA/B"/>
</dbReference>
<dbReference type="NCBIfam" id="NF006763">
    <property type="entry name" value="PRK09284.1"/>
    <property type="match status" value="1"/>
</dbReference>
<dbReference type="NCBIfam" id="NF009895">
    <property type="entry name" value="PRK13352.1"/>
    <property type="match status" value="1"/>
</dbReference>
<dbReference type="NCBIfam" id="TIGR00190">
    <property type="entry name" value="thiC"/>
    <property type="match status" value="1"/>
</dbReference>
<dbReference type="PANTHER" id="PTHR30557:SF1">
    <property type="entry name" value="PHOSPHOMETHYLPYRIMIDINE SYNTHASE, CHLOROPLASTIC"/>
    <property type="match status" value="1"/>
</dbReference>
<dbReference type="PANTHER" id="PTHR30557">
    <property type="entry name" value="THIAMINE BIOSYNTHESIS PROTEIN THIC"/>
    <property type="match status" value="1"/>
</dbReference>
<dbReference type="Pfam" id="PF13667">
    <property type="entry name" value="ThiC-associated"/>
    <property type="match status" value="1"/>
</dbReference>
<dbReference type="Pfam" id="PF01964">
    <property type="entry name" value="ThiC_Rad_SAM"/>
    <property type="match status" value="1"/>
</dbReference>
<dbReference type="SFLD" id="SFLDF00407">
    <property type="entry name" value="phosphomethylpyrimidine_syntha"/>
    <property type="match status" value="1"/>
</dbReference>
<dbReference type="SFLD" id="SFLDG01114">
    <property type="entry name" value="phosphomethylpyrimidine_syntha"/>
    <property type="match status" value="1"/>
</dbReference>
<dbReference type="SFLD" id="SFLDS00113">
    <property type="entry name" value="Radical_SAM_Phosphomethylpyrim"/>
    <property type="match status" value="1"/>
</dbReference>
<proteinExistence type="inferred from homology"/>
<feature type="chain" id="PRO_0000152848" description="Phosphomethylpyrimidine synthase">
    <location>
        <begin position="1"/>
        <end position="647"/>
    </location>
</feature>
<feature type="region of interest" description="Disordered" evidence="2">
    <location>
        <begin position="623"/>
        <end position="647"/>
    </location>
</feature>
<feature type="binding site" evidence="1">
    <location>
        <position position="235"/>
    </location>
    <ligand>
        <name>substrate</name>
    </ligand>
</feature>
<feature type="binding site" evidence="1">
    <location>
        <position position="264"/>
    </location>
    <ligand>
        <name>substrate</name>
    </ligand>
</feature>
<feature type="binding site" evidence="1">
    <location>
        <position position="293"/>
    </location>
    <ligand>
        <name>substrate</name>
    </ligand>
</feature>
<feature type="binding site" evidence="1">
    <location>
        <position position="329"/>
    </location>
    <ligand>
        <name>substrate</name>
    </ligand>
</feature>
<feature type="binding site" evidence="1">
    <location>
        <begin position="349"/>
        <end position="351"/>
    </location>
    <ligand>
        <name>substrate</name>
    </ligand>
</feature>
<feature type="binding site" evidence="1">
    <location>
        <begin position="390"/>
        <end position="393"/>
    </location>
    <ligand>
        <name>substrate</name>
    </ligand>
</feature>
<feature type="binding site" evidence="1">
    <location>
        <position position="429"/>
    </location>
    <ligand>
        <name>substrate</name>
    </ligand>
</feature>
<feature type="binding site" evidence="1">
    <location>
        <position position="433"/>
    </location>
    <ligand>
        <name>Zn(2+)</name>
        <dbReference type="ChEBI" id="CHEBI:29105"/>
    </ligand>
</feature>
<feature type="binding site" evidence="1">
    <location>
        <position position="456"/>
    </location>
    <ligand>
        <name>substrate</name>
    </ligand>
</feature>
<feature type="binding site" evidence="1">
    <location>
        <position position="497"/>
    </location>
    <ligand>
        <name>Zn(2+)</name>
        <dbReference type="ChEBI" id="CHEBI:29105"/>
    </ligand>
</feature>
<feature type="binding site" evidence="1">
    <location>
        <position position="577"/>
    </location>
    <ligand>
        <name>[4Fe-4S] cluster</name>
        <dbReference type="ChEBI" id="CHEBI:49883"/>
        <note>4Fe-4S-S-AdoMet</note>
    </ligand>
</feature>
<feature type="binding site" evidence="1">
    <location>
        <position position="580"/>
    </location>
    <ligand>
        <name>[4Fe-4S] cluster</name>
        <dbReference type="ChEBI" id="CHEBI:49883"/>
        <note>4Fe-4S-S-AdoMet</note>
    </ligand>
</feature>
<feature type="binding site" evidence="1">
    <location>
        <position position="585"/>
    </location>
    <ligand>
        <name>[4Fe-4S] cluster</name>
        <dbReference type="ChEBI" id="CHEBI:49883"/>
        <note>4Fe-4S-S-AdoMet</note>
    </ligand>
</feature>
<reference key="1">
    <citation type="journal article" date="2003" name="Genome Res.">
        <title>Comparative genome analysis of Vibrio vulnificus, a marine pathogen.</title>
        <authorList>
            <person name="Chen C.-Y."/>
            <person name="Wu K.-M."/>
            <person name="Chang Y.-C."/>
            <person name="Chang C.-H."/>
            <person name="Tsai H.-C."/>
            <person name="Liao T.-L."/>
            <person name="Liu Y.-M."/>
            <person name="Chen H.-J."/>
            <person name="Shen A.B.-T."/>
            <person name="Li J.-C."/>
            <person name="Su T.-L."/>
            <person name="Shao C.-P."/>
            <person name="Lee C.-T."/>
            <person name="Hor L.-I."/>
            <person name="Tsai S.-F."/>
        </authorList>
    </citation>
    <scope>NUCLEOTIDE SEQUENCE [LARGE SCALE GENOMIC DNA]</scope>
    <source>
        <strain>YJ016</strain>
    </source>
</reference>
<comment type="function">
    <text evidence="1">Catalyzes the synthesis of the hydroxymethylpyrimidine phosphate (HMP-P) moiety of thiamine from aminoimidazole ribotide (AIR) in a radical S-adenosyl-L-methionine (SAM)-dependent reaction.</text>
</comment>
<comment type="catalytic activity">
    <reaction evidence="1">
        <text>5-amino-1-(5-phospho-beta-D-ribosyl)imidazole + S-adenosyl-L-methionine = 4-amino-2-methyl-5-(phosphooxymethyl)pyrimidine + CO + 5'-deoxyadenosine + formate + L-methionine + 3 H(+)</text>
        <dbReference type="Rhea" id="RHEA:24840"/>
        <dbReference type="ChEBI" id="CHEBI:15378"/>
        <dbReference type="ChEBI" id="CHEBI:15740"/>
        <dbReference type="ChEBI" id="CHEBI:17245"/>
        <dbReference type="ChEBI" id="CHEBI:17319"/>
        <dbReference type="ChEBI" id="CHEBI:57844"/>
        <dbReference type="ChEBI" id="CHEBI:58354"/>
        <dbReference type="ChEBI" id="CHEBI:59789"/>
        <dbReference type="ChEBI" id="CHEBI:137981"/>
        <dbReference type="EC" id="4.1.99.17"/>
    </reaction>
</comment>
<comment type="cofactor">
    <cofactor evidence="1">
        <name>[4Fe-4S] cluster</name>
        <dbReference type="ChEBI" id="CHEBI:49883"/>
    </cofactor>
    <text evidence="1">Binds 1 [4Fe-4S] cluster per subunit. The cluster is coordinated with 3 cysteines and an exchangeable S-adenosyl-L-methionine.</text>
</comment>
<comment type="pathway">
    <text evidence="1">Cofactor biosynthesis; thiamine diphosphate biosynthesis.</text>
</comment>
<comment type="subunit">
    <text evidence="1">Homodimer.</text>
</comment>
<comment type="similarity">
    <text evidence="1">Belongs to the ThiC family.</text>
</comment>
<keyword id="KW-0004">4Fe-4S</keyword>
<keyword id="KW-0408">Iron</keyword>
<keyword id="KW-0411">Iron-sulfur</keyword>
<keyword id="KW-0456">Lyase</keyword>
<keyword id="KW-0479">Metal-binding</keyword>
<keyword id="KW-0949">S-adenosyl-L-methionine</keyword>
<keyword id="KW-0784">Thiamine biosynthesis</keyword>
<keyword id="KW-0862">Zinc</keyword>
<sequence>MSNRKQARLEAKQFIDTLSVQPYPNSTKVYVEGSRSDIRVPMREISLADSLVGGTKEAPIFQPNEAVRVYDTSGVYTDPTHQIDLYNGLPKLREEWIAERADTEVLDDVSSVYTKERLEDETLDELRYGNLPRIRRAKAGYCVTQLHYARKGIITPEMEYIALRENMGRAKYQDEVLTQQHAGQSFGANLPKEITPEFVRREVAEGRAIIPSNINHPESEPMIIGRNFLVKVNANIGNSSVTSSIEEEVEKLVWSTRWGGDTVMDLSTGRNIHETREWILRNSPVPIGTVPMYQALEKVNGVAENLTWEVMRDTLIEQAEQGVDYFTIHAGLLLRYIPMTAKRVTGIVSRGGSIIAKWCLAHHQESFLYTHFREICEICAKYDVALSLGDGLRPGSIADANDEAQFAELRTLGELTKIAWEYDVQVIIEGPGHVPMHMIKENMDEQLKHCHEAPFYTLGPLTTDIAPGYDHITSGIGAAMIGWYGCAMLCYVTPKEHLGLPNKEDVKTGLITYKLAAHAADLAKGHPGAQVRDNALSKARFEFRWQDQFNLSLDPDTARAFHDETLPQESGKVAHFCSMCGPKFCSMKISQEVREYAKGQQGEAGQAIEVKLLDDPLEGMKQKSAEFKASGSELYHPAVSHEEVAEG</sequence>
<gene>
    <name evidence="1" type="primary">thiC</name>
    <name type="ordered locus">VV3207</name>
</gene>